<organism>
    <name type="scientific">Oncorhynchus mykiss</name>
    <name type="common">Rainbow trout</name>
    <name type="synonym">Salmo gairdneri</name>
    <dbReference type="NCBI Taxonomy" id="8022"/>
    <lineage>
        <taxon>Eukaryota</taxon>
        <taxon>Metazoa</taxon>
        <taxon>Chordata</taxon>
        <taxon>Craniata</taxon>
        <taxon>Vertebrata</taxon>
        <taxon>Euteleostomi</taxon>
        <taxon>Actinopterygii</taxon>
        <taxon>Neopterygii</taxon>
        <taxon>Teleostei</taxon>
        <taxon>Protacanthopterygii</taxon>
        <taxon>Salmoniformes</taxon>
        <taxon>Salmonidae</taxon>
        <taxon>Salmoninae</taxon>
        <taxon>Oncorhynchus</taxon>
    </lineage>
</organism>
<feature type="initiator methionine" description="Removed">
    <location>
        <position position="1"/>
    </location>
</feature>
<feature type="peptide" id="PRO_0000044838" description="Protamine-2C">
    <location>
        <begin position="2"/>
        <end position="33"/>
    </location>
</feature>
<feature type="region of interest" description="Disordered" evidence="1">
    <location>
        <begin position="1"/>
        <end position="33"/>
    </location>
</feature>
<reference key="1">
    <citation type="journal article" date="1983" name="Nucleic Acids Res.">
        <title>Sequence homologies in the protamine gene family of rainbow trout.</title>
        <authorList>
            <person name="Aiken J.M."/>
            <person name="McKenzie D."/>
            <person name="Zhao H.-Z."/>
            <person name="States J.C."/>
            <person name="Dixon G.H."/>
        </authorList>
    </citation>
    <scope>NUCLEOTIDE SEQUENCE [GENOMIC DNA] (CLONE TP15)</scope>
</reference>
<reference key="2">
    <citation type="journal article" date="1981" name="Nucleic Acids Res.">
        <title>Molecular analysis of the protamine multi-gene family in rainbow trout testis.</title>
        <authorList>
            <person name="Gedamu L."/>
            <person name="Wosnick M.A."/>
            <person name="Connor W."/>
            <person name="Watson D.C."/>
            <person name="Dixon G.H."/>
            <person name="Iatrou K."/>
        </authorList>
    </citation>
    <scope>NUCLEOTIDE SEQUENCE OF 7-33 (CLONE PRTP242)</scope>
</reference>
<reference key="3">
    <citation type="journal article" date="1979" name="Nature">
        <title>Sequence divergence of rainbow trout protamine mRNAs; comparison of coding and non-coding nucleotide sequences in three protamine cDNA plasmids.</title>
        <authorList>
            <person name="Jenkins J.R."/>
        </authorList>
    </citation>
    <scope>NUCLEOTIDE SEQUENCE OF 7-33 (CLONE PTP8)</scope>
</reference>
<reference key="4">
    <citation type="journal article" date="1986" name="Eur. J. Biochem.">
        <title>Rainbow trout protamines. Amino acid sequences of six distinct proteins from a single testis.</title>
        <authorList>
            <person name="McKay D.J."/>
            <person name="Renaux B.S."/>
            <person name="Dixon G.H."/>
        </authorList>
    </citation>
    <scope>PROTEIN SEQUENCE (2C)</scope>
</reference>
<name>PRT2C_ONCMY</name>
<dbReference type="EMBL" id="X02924">
    <property type="protein sequence ID" value="CAA26680.1"/>
    <property type="molecule type" value="mRNA"/>
</dbReference>
<dbReference type="EMBL" id="X01596">
    <property type="protein sequence ID" value="CAA25749.1"/>
    <property type="molecule type" value="Genomic_DNA"/>
</dbReference>
<dbReference type="PIR" id="B21211">
    <property type="entry name" value="IRTR42"/>
</dbReference>
<dbReference type="PIR" id="D21211">
    <property type="entry name" value="D21211"/>
</dbReference>
<dbReference type="Proteomes" id="UP000694395">
    <property type="component" value="Unplaced"/>
</dbReference>
<dbReference type="GO" id="GO:0000786">
    <property type="term" value="C:nucleosome"/>
    <property type="evidence" value="ECO:0007669"/>
    <property type="project" value="UniProtKB-KW"/>
</dbReference>
<dbReference type="GO" id="GO:0005634">
    <property type="term" value="C:nucleus"/>
    <property type="evidence" value="ECO:0007669"/>
    <property type="project" value="UniProtKB-SubCell"/>
</dbReference>
<dbReference type="GO" id="GO:0003677">
    <property type="term" value="F:DNA binding"/>
    <property type="evidence" value="ECO:0007669"/>
    <property type="project" value="UniProtKB-KW"/>
</dbReference>
<dbReference type="GO" id="GO:0030154">
    <property type="term" value="P:cell differentiation"/>
    <property type="evidence" value="ECO:0007669"/>
    <property type="project" value="UniProtKB-KW"/>
</dbReference>
<dbReference type="GO" id="GO:0030261">
    <property type="term" value="P:chromosome condensation"/>
    <property type="evidence" value="ECO:0007669"/>
    <property type="project" value="UniProtKB-KW"/>
</dbReference>
<dbReference type="GO" id="GO:0007283">
    <property type="term" value="P:spermatogenesis"/>
    <property type="evidence" value="ECO:0007669"/>
    <property type="project" value="UniProtKB-KW"/>
</dbReference>
<protein>
    <recommendedName>
        <fullName>Protamine-2C</fullName>
    </recommendedName>
</protein>
<sequence length="33" mass="4450">MPRRRRSSRRPVRRRRRPRVSRRRRRRGGRRRR</sequence>
<comment type="function">
    <text>Protamines substitute for histones in the chromatin of sperm during the haploid phase of spermatogenesis. They compact sperm DNA into a highly condensed, stable and inactive complex.</text>
</comment>
<comment type="subcellular location">
    <subcellularLocation>
        <location>Nucleus</location>
    </subcellularLocation>
    <subcellularLocation>
        <location>Chromosome</location>
    </subcellularLocation>
</comment>
<comment type="tissue specificity">
    <text>Testis.</text>
</comment>
<keyword id="KW-0158">Chromosome</keyword>
<keyword id="KW-0217">Developmental protein</keyword>
<keyword id="KW-0221">Differentiation</keyword>
<keyword id="KW-0903">Direct protein sequencing</keyword>
<keyword id="KW-0226">DNA condensation</keyword>
<keyword id="KW-0238">DNA-binding</keyword>
<keyword id="KW-0544">Nucleosome core</keyword>
<keyword id="KW-0539">Nucleus</keyword>
<keyword id="KW-0744">Spermatogenesis</keyword>
<accession>P02334</accession>
<evidence type="ECO:0000256" key="1">
    <source>
        <dbReference type="SAM" id="MobiDB-lite"/>
    </source>
</evidence>
<proteinExistence type="evidence at protein level"/>